<accession>Q1LPI5</accession>
<protein>
    <recommendedName>
        <fullName evidence="1">Enolase 1</fullName>
        <ecNumber evidence="1">4.2.1.11</ecNumber>
    </recommendedName>
    <alternativeName>
        <fullName evidence="1">2-phospho-D-glycerate hydro-lyase 1</fullName>
    </alternativeName>
    <alternativeName>
        <fullName evidence="1">2-phosphoglycerate dehydratase 1</fullName>
    </alternativeName>
</protein>
<comment type="function">
    <text evidence="1">Catalyzes the reversible conversion of 2-phosphoglycerate (2-PG) into phosphoenolpyruvate (PEP). It is essential for the degradation of carbohydrates via glycolysis.</text>
</comment>
<comment type="catalytic activity">
    <reaction evidence="1">
        <text>(2R)-2-phosphoglycerate = phosphoenolpyruvate + H2O</text>
        <dbReference type="Rhea" id="RHEA:10164"/>
        <dbReference type="ChEBI" id="CHEBI:15377"/>
        <dbReference type="ChEBI" id="CHEBI:58289"/>
        <dbReference type="ChEBI" id="CHEBI:58702"/>
        <dbReference type="EC" id="4.2.1.11"/>
    </reaction>
</comment>
<comment type="cofactor">
    <cofactor evidence="1">
        <name>Mg(2+)</name>
        <dbReference type="ChEBI" id="CHEBI:18420"/>
    </cofactor>
    <text evidence="1">Binds a second Mg(2+) ion via substrate during catalysis.</text>
</comment>
<comment type="pathway">
    <text evidence="1">Carbohydrate degradation; glycolysis; pyruvate from D-glyceraldehyde 3-phosphate: step 4/5.</text>
</comment>
<comment type="subcellular location">
    <subcellularLocation>
        <location evidence="1">Cytoplasm</location>
    </subcellularLocation>
    <subcellularLocation>
        <location evidence="1">Secreted</location>
    </subcellularLocation>
    <subcellularLocation>
        <location evidence="1">Cell surface</location>
    </subcellularLocation>
    <text evidence="1">Fractions of enolase are present in both the cytoplasm and on the cell surface.</text>
</comment>
<comment type="similarity">
    <text evidence="1">Belongs to the enolase family.</text>
</comment>
<proteinExistence type="inferred from homology"/>
<keyword id="KW-0963">Cytoplasm</keyword>
<keyword id="KW-0324">Glycolysis</keyword>
<keyword id="KW-0456">Lyase</keyword>
<keyword id="KW-0460">Magnesium</keyword>
<keyword id="KW-0479">Metal-binding</keyword>
<keyword id="KW-1185">Reference proteome</keyword>
<keyword id="KW-0964">Secreted</keyword>
<organism>
    <name type="scientific">Cupriavidus metallidurans (strain ATCC 43123 / DSM 2839 / NBRC 102507 / CH34)</name>
    <name type="common">Ralstonia metallidurans</name>
    <dbReference type="NCBI Taxonomy" id="266264"/>
    <lineage>
        <taxon>Bacteria</taxon>
        <taxon>Pseudomonadati</taxon>
        <taxon>Pseudomonadota</taxon>
        <taxon>Betaproteobacteria</taxon>
        <taxon>Burkholderiales</taxon>
        <taxon>Burkholderiaceae</taxon>
        <taxon>Cupriavidus</taxon>
    </lineage>
</organism>
<sequence>MSAIVDIIGREVLDSRGNPTVECDVLLESGVMGRAAVPSGASTGSREAIELRDGDKSRYLGKGVLKAVEHINTEISEAIMGLDASEQAFLDRTLIELDGTENKGRLGANAMLAVSMAVAKAAAEEAGLPLYRYFGGSGAMQMPVPMMNIVNGGAHANNSLDIQEFMIMPVSQTSFREALRCGAEVFHALKKILSDKGMSTAVGDEGGFAPNFSSNEECLNTVVQAIEKAGYKAGEDVLLALDCAASEFYHEAEGVYSLEGEGLKLTSTQFADYLANLCDKFPIVSIEDGMAEGDWEGWKTLTDKLGKRVQLVGDDLFVTNTKILKEGIEKGIGNSILIKINQIGTLTETFAAIEMAKRAGYTAVISHRSGETEDSTIADIAVGTNAGQIKTGSLSRSDRISKYNQLLRIEEDLGDIATYPGKSTFYNLR</sequence>
<evidence type="ECO:0000255" key="1">
    <source>
        <dbReference type="HAMAP-Rule" id="MF_00318"/>
    </source>
</evidence>
<name>ENO1_CUPMC</name>
<dbReference type="EC" id="4.2.1.11" evidence="1"/>
<dbReference type="EMBL" id="CP000352">
    <property type="protein sequence ID" value="ABF07941.1"/>
    <property type="molecule type" value="Genomic_DNA"/>
</dbReference>
<dbReference type="SMR" id="Q1LPI5"/>
<dbReference type="STRING" id="266264.Rmet_1055"/>
<dbReference type="KEGG" id="rme:Rmet_1055"/>
<dbReference type="eggNOG" id="COG0148">
    <property type="taxonomic scope" value="Bacteria"/>
</dbReference>
<dbReference type="HOGENOM" id="CLU_031223_2_1_4"/>
<dbReference type="UniPathway" id="UPA00109">
    <property type="reaction ID" value="UER00187"/>
</dbReference>
<dbReference type="Proteomes" id="UP000002429">
    <property type="component" value="Chromosome"/>
</dbReference>
<dbReference type="GO" id="GO:0009986">
    <property type="term" value="C:cell surface"/>
    <property type="evidence" value="ECO:0007669"/>
    <property type="project" value="UniProtKB-SubCell"/>
</dbReference>
<dbReference type="GO" id="GO:0005576">
    <property type="term" value="C:extracellular region"/>
    <property type="evidence" value="ECO:0007669"/>
    <property type="project" value="UniProtKB-SubCell"/>
</dbReference>
<dbReference type="GO" id="GO:0000015">
    <property type="term" value="C:phosphopyruvate hydratase complex"/>
    <property type="evidence" value="ECO:0007669"/>
    <property type="project" value="InterPro"/>
</dbReference>
<dbReference type="GO" id="GO:0000287">
    <property type="term" value="F:magnesium ion binding"/>
    <property type="evidence" value="ECO:0007669"/>
    <property type="project" value="UniProtKB-UniRule"/>
</dbReference>
<dbReference type="GO" id="GO:0004634">
    <property type="term" value="F:phosphopyruvate hydratase activity"/>
    <property type="evidence" value="ECO:0007669"/>
    <property type="project" value="UniProtKB-UniRule"/>
</dbReference>
<dbReference type="GO" id="GO:0006096">
    <property type="term" value="P:glycolytic process"/>
    <property type="evidence" value="ECO:0007669"/>
    <property type="project" value="UniProtKB-UniRule"/>
</dbReference>
<dbReference type="CDD" id="cd03313">
    <property type="entry name" value="enolase"/>
    <property type="match status" value="1"/>
</dbReference>
<dbReference type="FunFam" id="3.20.20.120:FF:000001">
    <property type="entry name" value="Enolase"/>
    <property type="match status" value="1"/>
</dbReference>
<dbReference type="FunFam" id="3.30.390.10:FF:000001">
    <property type="entry name" value="Enolase"/>
    <property type="match status" value="1"/>
</dbReference>
<dbReference type="Gene3D" id="3.20.20.120">
    <property type="entry name" value="Enolase-like C-terminal domain"/>
    <property type="match status" value="1"/>
</dbReference>
<dbReference type="Gene3D" id="3.30.390.10">
    <property type="entry name" value="Enolase-like, N-terminal domain"/>
    <property type="match status" value="1"/>
</dbReference>
<dbReference type="HAMAP" id="MF_00318">
    <property type="entry name" value="Enolase"/>
    <property type="match status" value="1"/>
</dbReference>
<dbReference type="InterPro" id="IPR000941">
    <property type="entry name" value="Enolase"/>
</dbReference>
<dbReference type="InterPro" id="IPR036849">
    <property type="entry name" value="Enolase-like_C_sf"/>
</dbReference>
<dbReference type="InterPro" id="IPR029017">
    <property type="entry name" value="Enolase-like_N"/>
</dbReference>
<dbReference type="InterPro" id="IPR020810">
    <property type="entry name" value="Enolase_C"/>
</dbReference>
<dbReference type="InterPro" id="IPR020809">
    <property type="entry name" value="Enolase_CS"/>
</dbReference>
<dbReference type="InterPro" id="IPR020811">
    <property type="entry name" value="Enolase_N"/>
</dbReference>
<dbReference type="NCBIfam" id="TIGR01060">
    <property type="entry name" value="eno"/>
    <property type="match status" value="1"/>
</dbReference>
<dbReference type="PANTHER" id="PTHR11902">
    <property type="entry name" value="ENOLASE"/>
    <property type="match status" value="1"/>
</dbReference>
<dbReference type="PANTHER" id="PTHR11902:SF1">
    <property type="entry name" value="ENOLASE"/>
    <property type="match status" value="1"/>
</dbReference>
<dbReference type="Pfam" id="PF00113">
    <property type="entry name" value="Enolase_C"/>
    <property type="match status" value="1"/>
</dbReference>
<dbReference type="Pfam" id="PF03952">
    <property type="entry name" value="Enolase_N"/>
    <property type="match status" value="1"/>
</dbReference>
<dbReference type="PIRSF" id="PIRSF001400">
    <property type="entry name" value="Enolase"/>
    <property type="match status" value="1"/>
</dbReference>
<dbReference type="PRINTS" id="PR00148">
    <property type="entry name" value="ENOLASE"/>
</dbReference>
<dbReference type="SFLD" id="SFLDS00001">
    <property type="entry name" value="Enolase"/>
    <property type="match status" value="1"/>
</dbReference>
<dbReference type="SFLD" id="SFLDF00002">
    <property type="entry name" value="enolase"/>
    <property type="match status" value="1"/>
</dbReference>
<dbReference type="SMART" id="SM01192">
    <property type="entry name" value="Enolase_C"/>
    <property type="match status" value="1"/>
</dbReference>
<dbReference type="SMART" id="SM01193">
    <property type="entry name" value="Enolase_N"/>
    <property type="match status" value="1"/>
</dbReference>
<dbReference type="SUPFAM" id="SSF51604">
    <property type="entry name" value="Enolase C-terminal domain-like"/>
    <property type="match status" value="1"/>
</dbReference>
<dbReference type="SUPFAM" id="SSF54826">
    <property type="entry name" value="Enolase N-terminal domain-like"/>
    <property type="match status" value="1"/>
</dbReference>
<dbReference type="PROSITE" id="PS00164">
    <property type="entry name" value="ENOLASE"/>
    <property type="match status" value="1"/>
</dbReference>
<reference key="1">
    <citation type="journal article" date="2010" name="PLoS ONE">
        <title>The complete genome sequence of Cupriavidus metallidurans strain CH34, a master survivalist in harsh and anthropogenic environments.</title>
        <authorList>
            <person name="Janssen P.J."/>
            <person name="Van Houdt R."/>
            <person name="Moors H."/>
            <person name="Monsieurs P."/>
            <person name="Morin N."/>
            <person name="Michaux A."/>
            <person name="Benotmane M.A."/>
            <person name="Leys N."/>
            <person name="Vallaeys T."/>
            <person name="Lapidus A."/>
            <person name="Monchy S."/>
            <person name="Medigue C."/>
            <person name="Taghavi S."/>
            <person name="McCorkle S."/>
            <person name="Dunn J."/>
            <person name="van der Lelie D."/>
            <person name="Mergeay M."/>
        </authorList>
    </citation>
    <scope>NUCLEOTIDE SEQUENCE [LARGE SCALE GENOMIC DNA]</scope>
    <source>
        <strain>ATCC 43123 / DSM 2839 / NBRC 102507 / CH34</strain>
    </source>
</reference>
<gene>
    <name evidence="1" type="primary">eno1</name>
    <name type="ordered locus">Rmet_1055</name>
</gene>
<feature type="chain" id="PRO_0000267084" description="Enolase 1">
    <location>
        <begin position="1"/>
        <end position="429"/>
    </location>
</feature>
<feature type="active site" description="Proton donor" evidence="1">
    <location>
        <position position="205"/>
    </location>
</feature>
<feature type="active site" description="Proton acceptor" evidence="1">
    <location>
        <position position="339"/>
    </location>
</feature>
<feature type="binding site" evidence="1">
    <location>
        <position position="163"/>
    </location>
    <ligand>
        <name>(2R)-2-phosphoglycerate</name>
        <dbReference type="ChEBI" id="CHEBI:58289"/>
    </ligand>
</feature>
<feature type="binding site" evidence="1">
    <location>
        <position position="242"/>
    </location>
    <ligand>
        <name>Mg(2+)</name>
        <dbReference type="ChEBI" id="CHEBI:18420"/>
    </ligand>
</feature>
<feature type="binding site" evidence="1">
    <location>
        <position position="287"/>
    </location>
    <ligand>
        <name>Mg(2+)</name>
        <dbReference type="ChEBI" id="CHEBI:18420"/>
    </ligand>
</feature>
<feature type="binding site" evidence="1">
    <location>
        <position position="314"/>
    </location>
    <ligand>
        <name>Mg(2+)</name>
        <dbReference type="ChEBI" id="CHEBI:18420"/>
    </ligand>
</feature>
<feature type="binding site" evidence="1">
    <location>
        <position position="339"/>
    </location>
    <ligand>
        <name>(2R)-2-phosphoglycerate</name>
        <dbReference type="ChEBI" id="CHEBI:58289"/>
    </ligand>
</feature>
<feature type="binding site" evidence="1">
    <location>
        <position position="368"/>
    </location>
    <ligand>
        <name>(2R)-2-phosphoglycerate</name>
        <dbReference type="ChEBI" id="CHEBI:58289"/>
    </ligand>
</feature>
<feature type="binding site" evidence="1">
    <location>
        <position position="369"/>
    </location>
    <ligand>
        <name>(2R)-2-phosphoglycerate</name>
        <dbReference type="ChEBI" id="CHEBI:58289"/>
    </ligand>
</feature>
<feature type="binding site" evidence="1">
    <location>
        <position position="390"/>
    </location>
    <ligand>
        <name>(2R)-2-phosphoglycerate</name>
        <dbReference type="ChEBI" id="CHEBI:58289"/>
    </ligand>
</feature>